<proteinExistence type="evidence at protein level"/>
<keyword id="KW-0520">NAD</keyword>
<keyword id="KW-0560">Oxidoreductase</keyword>
<comment type="function">
    <text evidence="2">Catalyzes the oxidation of cyclopentanol to cyclopentanone and cyclohexanol to cyclohexanone. The activity toward cyclohexanol is 60% that of cyclopentanol.</text>
</comment>
<comment type="catalytic activity">
    <reaction evidence="2">
        <text>cyclopentanol + NAD(+) = cyclopentanone + NADH + H(+)</text>
        <dbReference type="Rhea" id="RHEA:11728"/>
        <dbReference type="ChEBI" id="CHEBI:15378"/>
        <dbReference type="ChEBI" id="CHEBI:16133"/>
        <dbReference type="ChEBI" id="CHEBI:16486"/>
        <dbReference type="ChEBI" id="CHEBI:57540"/>
        <dbReference type="ChEBI" id="CHEBI:57945"/>
        <dbReference type="EC" id="1.1.1.163"/>
    </reaction>
</comment>
<comment type="catalytic activity">
    <reaction evidence="2">
        <text>cyclohexanol + NAD(+) = cyclohexanone + NADH + H(+)</text>
        <dbReference type="Rhea" id="RHEA:10044"/>
        <dbReference type="ChEBI" id="CHEBI:15378"/>
        <dbReference type="ChEBI" id="CHEBI:17854"/>
        <dbReference type="ChEBI" id="CHEBI:18099"/>
        <dbReference type="ChEBI" id="CHEBI:57540"/>
        <dbReference type="ChEBI" id="CHEBI:57945"/>
        <dbReference type="EC" id="1.1.1.245"/>
    </reaction>
</comment>
<comment type="pathway">
    <text>Alcohol metabolism; cyclopentanol degradation; 5-valerolactone from cyclopentanol: step 1/2.</text>
</comment>
<comment type="similarity">
    <text evidence="4">Belongs to the short-chain dehydrogenases/reductases (SDR) family.</text>
</comment>
<evidence type="ECO:0000250" key="1">
    <source>
        <dbReference type="UniProtKB" id="P9WGT1"/>
    </source>
</evidence>
<evidence type="ECO:0000269" key="2">
    <source>
    </source>
</evidence>
<evidence type="ECO:0000303" key="3">
    <source>
    </source>
</evidence>
<evidence type="ECO:0000305" key="4"/>
<name>CPNA_COMS9</name>
<reference key="1">
    <citation type="journal article" date="2002" name="Appl. Environ. Microbiol.">
        <title>Cloning and characterization of a gene cluster involved in cyclopentanol metabolism in Comamonas sp. strain NCIMB 9872 and biotransformations effected by Escherichia coli-expressed cyclopentanone 1,2-monooxygenase.</title>
        <authorList>
            <person name="Iwaki H."/>
            <person name="Hasegawa Y."/>
            <person name="Wang S."/>
            <person name="Kayser M.M."/>
            <person name="Lau P.C.K."/>
        </authorList>
    </citation>
    <scope>NUCLEOTIDE SEQUENCE [GENOMIC DNA]</scope>
    <scope>FUNCTION</scope>
    <scope>CATALYTIC ACTIVITY</scope>
</reference>
<reference key="2">
    <citation type="journal article" date="2003" name="Appl. Environ. Microbiol.">
        <authorList>
            <person name="Iwaki H."/>
            <person name="Hasegawa Y."/>
            <person name="Wang S."/>
            <person name="Kayser M.M."/>
            <person name="Lau P.C.K."/>
        </authorList>
    </citation>
    <scope>ERRATUM OF PUBMED:12406764</scope>
</reference>
<feature type="chain" id="PRO_0000054551" description="Cyclopentanol dehydrogenase">
    <location>
        <begin position="1"/>
        <end position="250"/>
    </location>
</feature>
<feature type="active site" description="Proton acceptor" evidence="1">
    <location>
        <position position="155"/>
    </location>
</feature>
<feature type="binding site" evidence="1">
    <location>
        <position position="18"/>
    </location>
    <ligand>
        <name>NAD(+)</name>
        <dbReference type="ChEBI" id="CHEBI:57540"/>
    </ligand>
</feature>
<feature type="binding site" evidence="1">
    <location>
        <position position="37"/>
    </location>
    <ligand>
        <name>NAD(+)</name>
        <dbReference type="ChEBI" id="CHEBI:57540"/>
    </ligand>
</feature>
<feature type="binding site" evidence="1">
    <location>
        <position position="63"/>
    </location>
    <ligand>
        <name>NAD(+)</name>
        <dbReference type="ChEBI" id="CHEBI:57540"/>
    </ligand>
</feature>
<feature type="binding site" evidence="1">
    <location>
        <position position="64"/>
    </location>
    <ligand>
        <name>NAD(+)</name>
        <dbReference type="ChEBI" id="CHEBI:57540"/>
    </ligand>
</feature>
<feature type="binding site" evidence="1">
    <location>
        <position position="90"/>
    </location>
    <ligand>
        <name>NAD(+)</name>
        <dbReference type="ChEBI" id="CHEBI:57540"/>
    </ligand>
</feature>
<feature type="binding site" evidence="1">
    <location>
        <position position="155"/>
    </location>
    <ligand>
        <name>NAD(+)</name>
        <dbReference type="ChEBI" id="CHEBI:57540"/>
    </ligand>
</feature>
<feature type="binding site" evidence="1">
    <location>
        <position position="159"/>
    </location>
    <ligand>
        <name>NAD(+)</name>
        <dbReference type="ChEBI" id="CHEBI:57540"/>
    </ligand>
</feature>
<feature type="binding site" evidence="1">
    <location>
        <position position="188"/>
    </location>
    <ligand>
        <name>NAD(+)</name>
        <dbReference type="ChEBI" id="CHEBI:57540"/>
    </ligand>
</feature>
<feature type="binding site" evidence="1">
    <location>
        <position position="190"/>
    </location>
    <ligand>
        <name>NAD(+)</name>
        <dbReference type="ChEBI" id="CHEBI:57540"/>
    </ligand>
</feature>
<feature type="binding site" evidence="1">
    <location>
        <position position="193"/>
    </location>
    <ligand>
        <name>NAD(+)</name>
        <dbReference type="ChEBI" id="CHEBI:57540"/>
    </ligand>
</feature>
<dbReference type="EC" id="1.1.1.163" evidence="2"/>
<dbReference type="EC" id="1.1.1.245" evidence="2"/>
<dbReference type="EMBL" id="AB073151">
    <property type="protein sequence ID" value="BAC22653.1"/>
    <property type="molecule type" value="Genomic_DNA"/>
</dbReference>
<dbReference type="EMBL" id="AB022102">
    <property type="protein sequence ID" value="BAC01270.1"/>
    <property type="molecule type" value="Genomic_DNA"/>
</dbReference>
<dbReference type="SMR" id="Q8GAV9"/>
<dbReference type="KEGG" id="ag:BAC22653"/>
<dbReference type="BioCyc" id="MetaCyc:MONOMER-7722"/>
<dbReference type="UniPathway" id="UPA00764">
    <property type="reaction ID" value="UER00749"/>
</dbReference>
<dbReference type="GO" id="GO:0018460">
    <property type="term" value="F:cyclohexanol dehydrogenase activity"/>
    <property type="evidence" value="ECO:0007669"/>
    <property type="project" value="RHEA"/>
</dbReference>
<dbReference type="GO" id="GO:0055041">
    <property type="term" value="F:cyclopentanol dehydrogenase activity"/>
    <property type="evidence" value="ECO:0007669"/>
    <property type="project" value="UniProtKB-EC"/>
</dbReference>
<dbReference type="GO" id="GO:0033022">
    <property type="term" value="P:cyclopentanol catabolic process"/>
    <property type="evidence" value="ECO:0007669"/>
    <property type="project" value="UniProtKB-UniPathway"/>
</dbReference>
<dbReference type="CDD" id="cd05341">
    <property type="entry name" value="3beta-17beta-HSD_like_SDR_c"/>
    <property type="match status" value="1"/>
</dbReference>
<dbReference type="FunFam" id="3.40.50.720:FF:000084">
    <property type="entry name" value="Short-chain dehydrogenase reductase"/>
    <property type="match status" value="1"/>
</dbReference>
<dbReference type="Gene3D" id="3.40.50.720">
    <property type="entry name" value="NAD(P)-binding Rossmann-like Domain"/>
    <property type="match status" value="1"/>
</dbReference>
<dbReference type="InterPro" id="IPR036291">
    <property type="entry name" value="NAD(P)-bd_dom_sf"/>
</dbReference>
<dbReference type="InterPro" id="IPR002347">
    <property type="entry name" value="SDR_fam"/>
</dbReference>
<dbReference type="InterPro" id="IPR051122">
    <property type="entry name" value="SDR_superfamily_enzyme"/>
</dbReference>
<dbReference type="NCBIfam" id="NF005559">
    <property type="entry name" value="PRK07231.1"/>
    <property type="match status" value="1"/>
</dbReference>
<dbReference type="PANTHER" id="PTHR43477">
    <property type="entry name" value="DIHYDROANTICAPSIN 7-DEHYDROGENASE"/>
    <property type="match status" value="1"/>
</dbReference>
<dbReference type="PANTHER" id="PTHR43477:SF1">
    <property type="entry name" value="DIHYDROANTICAPSIN 7-DEHYDROGENASE"/>
    <property type="match status" value="1"/>
</dbReference>
<dbReference type="Pfam" id="PF13561">
    <property type="entry name" value="adh_short_C2"/>
    <property type="match status" value="1"/>
</dbReference>
<dbReference type="PRINTS" id="PR00081">
    <property type="entry name" value="GDHRDH"/>
</dbReference>
<dbReference type="PRINTS" id="PR00080">
    <property type="entry name" value="SDRFAMILY"/>
</dbReference>
<dbReference type="SUPFAM" id="SSF51735">
    <property type="entry name" value="NAD(P)-binding Rossmann-fold domains"/>
    <property type="match status" value="1"/>
</dbReference>
<gene>
    <name evidence="3" type="primary">cpnA</name>
</gene>
<sequence length="250" mass="26626">MGRVNDKVVLVTGGAMGMGLTHCTLLAREGATVYLSDMNEELGHQAVAEIRRQGGKAHFLHLDVTNENHWTGAVDTILAESDRLDALVNNAGILTLKPVQDTSNEEWDRIFEINVRSVFLGTRAVIEPMRKAHKGCIVNVSSIYGLVGAPGAAAYEASKGAVRLFTKACAVDLAPFNIRVNSVHPGVIATPMTQQILDAPQSARALLGPTLLGRAAQPMEVSQAVLFLVSDEASFVHGSELVVDGGYTAN</sequence>
<protein>
    <recommendedName>
        <fullName evidence="3">Cyclopentanol dehydrogenase</fullName>
        <ecNumber evidence="2">1.1.1.163</ecNumber>
    </recommendedName>
    <alternativeName>
        <fullName evidence="3">Cyclohexanol dehydrogenase</fullName>
        <ecNumber evidence="2">1.1.1.245</ecNumber>
    </alternativeName>
</protein>
<organism>
    <name type="scientific">Comamonas sp. (strain NCIMB 9872)</name>
    <dbReference type="NCBI Taxonomy" id="213664"/>
    <lineage>
        <taxon>Bacteria</taxon>
        <taxon>Pseudomonadati</taxon>
        <taxon>Pseudomonadota</taxon>
        <taxon>Betaproteobacteria</taxon>
        <taxon>Burkholderiales</taxon>
        <taxon>Comamonadaceae</taxon>
        <taxon>Comamonas</taxon>
    </lineage>
</organism>
<accession>Q8GAV9</accession>